<dbReference type="EC" id="2.4.1.-"/>
<dbReference type="EMBL" id="CP000480">
    <property type="protein sequence ID" value="ABK71357.1"/>
    <property type="molecule type" value="Genomic_DNA"/>
</dbReference>
<dbReference type="EMBL" id="CP001663">
    <property type="protein sequence ID" value="AFP37560.1"/>
    <property type="molecule type" value="Genomic_DNA"/>
</dbReference>
<dbReference type="RefSeq" id="WP_011727419.1">
    <property type="nucleotide sequence ID" value="NZ_SIJM01000011.1"/>
</dbReference>
<dbReference type="RefSeq" id="YP_885506.1">
    <property type="nucleotide sequence ID" value="NC_008596.1"/>
</dbReference>
<dbReference type="SMR" id="A0QRG8"/>
<dbReference type="STRING" id="246196.MSMEG_1113"/>
<dbReference type="CAZy" id="GT4">
    <property type="family name" value="Glycosyltransferase Family 4"/>
</dbReference>
<dbReference type="PaxDb" id="246196-MSMEI_1080"/>
<dbReference type="KEGG" id="msb:LJ00_05530"/>
<dbReference type="KEGG" id="msg:MSMEI_1080"/>
<dbReference type="KEGG" id="msm:MSMEG_1113"/>
<dbReference type="PATRIC" id="fig|246196.19.peg.1101"/>
<dbReference type="eggNOG" id="COG0438">
    <property type="taxonomic scope" value="Bacteria"/>
</dbReference>
<dbReference type="OrthoDB" id="9802525at2"/>
<dbReference type="UniPathway" id="UPA00949"/>
<dbReference type="Proteomes" id="UP000000757">
    <property type="component" value="Chromosome"/>
</dbReference>
<dbReference type="Proteomes" id="UP000006158">
    <property type="component" value="Chromosome"/>
</dbReference>
<dbReference type="GO" id="GO:0016020">
    <property type="term" value="C:membrane"/>
    <property type="evidence" value="ECO:0007669"/>
    <property type="project" value="GOC"/>
</dbReference>
<dbReference type="GO" id="GO:0000030">
    <property type="term" value="F:mannosyltransferase activity"/>
    <property type="evidence" value="ECO:0000250"/>
    <property type="project" value="UniProtKB"/>
</dbReference>
<dbReference type="GO" id="GO:0009247">
    <property type="term" value="P:glycolipid biosynthetic process"/>
    <property type="evidence" value="ECO:0000250"/>
    <property type="project" value="UniProtKB"/>
</dbReference>
<dbReference type="GO" id="GO:0046488">
    <property type="term" value="P:phosphatidylinositol metabolic process"/>
    <property type="evidence" value="ECO:0007669"/>
    <property type="project" value="UniProtKB-UniPathway"/>
</dbReference>
<dbReference type="GO" id="GO:0008654">
    <property type="term" value="P:phospholipid biosynthetic process"/>
    <property type="evidence" value="ECO:0007669"/>
    <property type="project" value="UniProtKB-KW"/>
</dbReference>
<dbReference type="CDD" id="cd03814">
    <property type="entry name" value="GT4-like"/>
    <property type="match status" value="1"/>
</dbReference>
<dbReference type="FunFam" id="3.40.50.2000:FF:000303">
    <property type="entry name" value="GDP-mannose-dependent alpha-mannosyltransferase"/>
    <property type="match status" value="1"/>
</dbReference>
<dbReference type="FunFam" id="3.40.50.2000:FF:000145">
    <property type="entry name" value="Probable glycosyl transferase"/>
    <property type="match status" value="1"/>
</dbReference>
<dbReference type="Gene3D" id="3.40.50.2000">
    <property type="entry name" value="Glycogen Phosphorylase B"/>
    <property type="match status" value="2"/>
</dbReference>
<dbReference type="InterPro" id="IPR001296">
    <property type="entry name" value="Glyco_trans_1"/>
</dbReference>
<dbReference type="InterPro" id="IPR028098">
    <property type="entry name" value="Glyco_trans_4-like_N"/>
</dbReference>
<dbReference type="InterPro" id="IPR050194">
    <property type="entry name" value="Glycosyltransferase_grp1"/>
</dbReference>
<dbReference type="PANTHER" id="PTHR45947">
    <property type="entry name" value="SULFOQUINOVOSYL TRANSFERASE SQD2"/>
    <property type="match status" value="1"/>
</dbReference>
<dbReference type="PANTHER" id="PTHR45947:SF3">
    <property type="entry name" value="SULFOQUINOVOSYL TRANSFERASE SQD2"/>
    <property type="match status" value="1"/>
</dbReference>
<dbReference type="Pfam" id="PF13439">
    <property type="entry name" value="Glyco_transf_4"/>
    <property type="match status" value="1"/>
</dbReference>
<dbReference type="Pfam" id="PF00534">
    <property type="entry name" value="Glycos_transf_1"/>
    <property type="match status" value="1"/>
</dbReference>
<dbReference type="SUPFAM" id="SSF53756">
    <property type="entry name" value="UDP-Glycosyltransferase/glycogen phosphorylase"/>
    <property type="match status" value="1"/>
</dbReference>
<reference key="1">
    <citation type="submission" date="2006-10" db="EMBL/GenBank/DDBJ databases">
        <authorList>
            <person name="Fleischmann R.D."/>
            <person name="Dodson R.J."/>
            <person name="Haft D.H."/>
            <person name="Merkel J.S."/>
            <person name="Nelson W.C."/>
            <person name="Fraser C.M."/>
        </authorList>
    </citation>
    <scope>NUCLEOTIDE SEQUENCE [LARGE SCALE GENOMIC DNA]</scope>
    <source>
        <strain>ATCC 700084 / mc(2)155</strain>
    </source>
</reference>
<reference key="2">
    <citation type="journal article" date="2007" name="Genome Biol.">
        <title>Interrupted coding sequences in Mycobacterium smegmatis: authentic mutations or sequencing errors?</title>
        <authorList>
            <person name="Deshayes C."/>
            <person name="Perrodou E."/>
            <person name="Gallien S."/>
            <person name="Euphrasie D."/>
            <person name="Schaeffer C."/>
            <person name="Van-Dorsselaer A."/>
            <person name="Poch O."/>
            <person name="Lecompte O."/>
            <person name="Reyrat J.-M."/>
        </authorList>
    </citation>
    <scope>NUCLEOTIDE SEQUENCE [LARGE SCALE GENOMIC DNA]</scope>
    <source>
        <strain>ATCC 700084 / mc(2)155</strain>
    </source>
</reference>
<reference key="3">
    <citation type="journal article" date="2009" name="Genome Res.">
        <title>Ortho-proteogenomics: multiple proteomes investigation through orthology and a new MS-based protocol.</title>
        <authorList>
            <person name="Gallien S."/>
            <person name="Perrodou E."/>
            <person name="Carapito C."/>
            <person name="Deshayes C."/>
            <person name="Reyrat J.-M."/>
            <person name="Van Dorsselaer A."/>
            <person name="Poch O."/>
            <person name="Schaeffer C."/>
            <person name="Lecompte O."/>
        </authorList>
    </citation>
    <scope>NUCLEOTIDE SEQUENCE [LARGE SCALE GENOMIC DNA]</scope>
    <source>
        <strain>ATCC 700084 / mc(2)155</strain>
    </source>
</reference>
<comment type="function">
    <text evidence="1">Catalyzes the addition of a mannose residue from GDP-D-mannose to GlcAGroAc2 to generate 1,2-di-O-C16/C18:1-(alpha-D-mannopyranosyl)-(1-4)-(alpha-D-glucopyranosyluronic acid)-(1-3)-glycerol(ManGlcAGroAc2).</text>
</comment>
<comment type="pathway">
    <text>Phospholipid metabolism; phosphatidylinositol metabolism.</text>
</comment>
<comment type="similarity">
    <text evidence="2">Belongs to the glycosyltransferase group 1 family. Glycosyltransferase 4 subfamily.</text>
</comment>
<name>MGTA_MYCS2</name>
<organism>
    <name type="scientific">Mycolicibacterium smegmatis (strain ATCC 700084 / mc(2)155)</name>
    <name type="common">Mycobacterium smegmatis</name>
    <dbReference type="NCBI Taxonomy" id="246196"/>
    <lineage>
        <taxon>Bacteria</taxon>
        <taxon>Bacillati</taxon>
        <taxon>Actinomycetota</taxon>
        <taxon>Actinomycetes</taxon>
        <taxon>Mycobacteriales</taxon>
        <taxon>Mycobacteriaceae</taxon>
        <taxon>Mycolicibacterium</taxon>
    </lineage>
</organism>
<gene>
    <name type="primary">mgtA</name>
    <name type="synonym">pimB</name>
    <name type="ordered locus">MSMEG_1113</name>
    <name type="ordered locus">MSMEI_1080</name>
</gene>
<proteinExistence type="inferred from homology"/>
<accession>A0QRG8</accession>
<accession>I7F7L0</accession>
<evidence type="ECO:0000250" key="1"/>
<evidence type="ECO:0000305" key="2"/>
<feature type="chain" id="PRO_0000393731" description="GDP-mannose-dependent alpha-mannosyltransferase">
    <location>
        <begin position="1"/>
        <end position="375"/>
    </location>
</feature>
<keyword id="KW-0328">Glycosyltransferase</keyword>
<keyword id="KW-0444">Lipid biosynthesis</keyword>
<keyword id="KW-0443">Lipid metabolism</keyword>
<keyword id="KW-0594">Phospholipid biosynthesis</keyword>
<keyword id="KW-1208">Phospholipid metabolism</keyword>
<keyword id="KW-1185">Reference proteome</keyword>
<keyword id="KW-0808">Transferase</keyword>
<keyword id="KW-0843">Virulence</keyword>
<sequence>MRVAIVAESFLPNVNGVTNSVLRVIDHLRRTGHEVLVIAPDTPRGQPPADRIHDGVRVHRVPSRMFPKITSLPLGVPRPRMIGVLRGFDPDVVHLASPALLGYGGLHAARHLGVPSVAVFQTDVAGFAESYGMGVASRAAWAWTRHLHSRADRTLAPSTSAMENLAAHRIPRVHRWGRGVDITGFVPSARDEHLRRTWSPDGRPIVGFVGRLAPEKHVERLAVLAARDDLQLVIVGDGVDRVKLQTVLPTAVFTGELRGAALAAAYASMDVFVHPGEHETFCQTVQEAMASGVPVIAPDAGGPRDLVAPCRTGLLLDVDGFECALPAAVTHLIAERRRYGIAARRSVLARTWPVVCDELIGHYEAVLGRRSLRAA</sequence>
<protein>
    <recommendedName>
        <fullName>GDP-mannose-dependent alpha-mannosyltransferase</fullName>
        <ecNumber>2.4.1.-</ecNumber>
    </recommendedName>
    <alternativeName>
        <fullName>Guanosine diphosphomannose-dependent alpha-mannosyltransferase</fullName>
    </alternativeName>
</protein>